<comment type="function">
    <text evidence="3">Terpene synthase (TPS) involved in defensive oleoresin formation in conifers in response to insect attack or other injury.</text>
</comment>
<comment type="catalytic activity">
    <reaction evidence="3">
        <text>(2E)-geranyl diphosphate = (+)-car-3-ene + diphosphate</text>
        <dbReference type="Rhea" id="RHEA:32539"/>
        <dbReference type="ChEBI" id="CHEBI:7"/>
        <dbReference type="ChEBI" id="CHEBI:33019"/>
        <dbReference type="ChEBI" id="CHEBI:58057"/>
        <dbReference type="EC" id="4.2.3.107"/>
    </reaction>
</comment>
<comment type="cofactor">
    <cofactor evidence="1">
        <name>Mg(2+)</name>
        <dbReference type="ChEBI" id="CHEBI:18420"/>
    </cofactor>
    <cofactor evidence="1">
        <name>Mn(2+)</name>
        <dbReference type="ChEBI" id="CHEBI:29035"/>
    </cofactor>
    <text evidence="1">Binds 3 Mg(2+) or Mn(2+) ions per subunit.</text>
</comment>
<comment type="pathway">
    <text>Terpene metabolism; oleoresin biosynthesis.</text>
</comment>
<comment type="subcellular location">
    <subcellularLocation>
        <location evidence="4">Plastid</location>
        <location evidence="4">Chloroplast</location>
    </subcellularLocation>
</comment>
<comment type="induction">
    <text evidence="3">By jasmonic acid (MeJA).</text>
</comment>
<comment type="similarity">
    <text evidence="4">Belongs to the terpene synthase family. Tpsd subfamily.</text>
</comment>
<reference key="1">
    <citation type="journal article" date="2003" name="Plant Mol. Biol.">
        <title>Traumatic resin defense in Norway spruce (Picea abies): methyl jasmonate-induced terpene synthase gene expression, and cDNA cloning and functional characterization of (+)-3-carene synthase.</title>
        <authorList>
            <person name="Faeldt J."/>
            <person name="Martin D."/>
            <person name="Miller B."/>
            <person name="Rawat S."/>
            <person name="Bohlmann J."/>
        </authorList>
    </citation>
    <scope>NUCLEOTIDE SEQUENCE [MRNA]</scope>
    <scope>FUNCTION</scope>
    <scope>CATALYTIC ACTIVITY</scope>
    <scope>INDUCTION BY JASMONIC ACID</scope>
</reference>
<accession>Q84SM8</accession>
<sequence length="627" mass="71913">MSVISILPLASKSCLYKSLMSSTHELKALCRPIATLGMCRRGKSVMASKSTSLTTAVSDDGVQRRIGDHHSNLWDDNFIQSLSSPYGASSYGERAERLIGEVKEIFNSLSRTDGELVSHVDDLLQHLSMVDNVERLGIDRHFQTEIKVSLDYVYSYWSEKGIGSGRDIVCTDLNTTALGFRILRLHGYTVFPDVFEHFKDQMGRIACSDNHTERQISSILNLFRASLIAFPGEKVMEEAEIFSATYLKEALQTIPVSSLSQEIQYVLQYRWHSNLPRLEARTYIDILQENTKNQMLDVNTKKVLELAKLEFNIFHSLQQNELKSVSRWWKESGFPDLNFIRHRHVEFYTLVSGIDMEPKHCTFRLSFVKMCHLITVLDDMYDTFGTIDELRLFTAAVKRWDPSTTECLPEYMKGVYTVLYETVNEMAQEAQKSQGRDTLSYVRQALEAYIGAYHKEAEWISSGYLPTFDEYFENGKVSSGHRIATLQPTFMLDIPFPHHVLQEIDFPSKFNDFACSILRLRGDTRCYQADRARGEEASCISCYMKDNPGSTQEDALNHINNMIEETIKKLNWELLKPDNNVPISSKKHAFDINRGLHHFYNYRDGYTVASNETKNLVIKTVLEPVPM</sequence>
<proteinExistence type="evidence at protein level"/>
<protein>
    <recommendedName>
        <fullName>Carene synthase, chloroplastic</fullName>
        <shortName>PaJF67</shortName>
        <shortName>PaTPS-3car</shortName>
        <ecNumber>4.2.3.107</ecNumber>
    </recommendedName>
    <alternativeName>
        <fullName>(+)-car-3-ene synthase</fullName>
    </alternativeName>
    <alternativeName>
        <fullName>3-carene cyclase</fullName>
    </alternativeName>
</protein>
<keyword id="KW-0150">Chloroplast</keyword>
<keyword id="KW-0456">Lyase</keyword>
<keyword id="KW-0460">Magnesium</keyword>
<keyword id="KW-0464">Manganese</keyword>
<keyword id="KW-0479">Metal-binding</keyword>
<keyword id="KW-0934">Plastid</keyword>
<keyword id="KW-0809">Transit peptide</keyword>
<evidence type="ECO:0000250" key="1"/>
<evidence type="ECO:0000255" key="2"/>
<evidence type="ECO:0000269" key="3">
    <source>
    </source>
</evidence>
<evidence type="ECO:0000305" key="4"/>
<feature type="transit peptide" description="Chloroplast" evidence="2">
    <location>
        <begin position="1"/>
        <end position="36"/>
    </location>
</feature>
<feature type="chain" id="PRO_0000418971" description="Carene synthase, chloroplastic">
    <location>
        <begin position="37"/>
        <end position="627"/>
    </location>
</feature>
<feature type="short sequence motif" description="DDXXD motif">
    <location>
        <begin position="378"/>
        <end position="382"/>
    </location>
</feature>
<feature type="binding site" evidence="1">
    <location>
        <position position="378"/>
    </location>
    <ligand>
        <name>Mg(2+)</name>
        <dbReference type="ChEBI" id="CHEBI:18420"/>
        <label>1</label>
    </ligand>
</feature>
<feature type="binding site" evidence="1">
    <location>
        <position position="378"/>
    </location>
    <ligand>
        <name>Mg(2+)</name>
        <dbReference type="ChEBI" id="CHEBI:18420"/>
        <label>2</label>
    </ligand>
</feature>
<feature type="binding site" evidence="1">
    <location>
        <position position="382"/>
    </location>
    <ligand>
        <name>Mg(2+)</name>
        <dbReference type="ChEBI" id="CHEBI:18420"/>
        <label>1</label>
    </ligand>
</feature>
<feature type="binding site" evidence="1">
    <location>
        <position position="382"/>
    </location>
    <ligand>
        <name>Mg(2+)</name>
        <dbReference type="ChEBI" id="CHEBI:18420"/>
        <label>2</label>
    </ligand>
</feature>
<feature type="binding site" evidence="1">
    <location>
        <position position="530"/>
    </location>
    <ligand>
        <name>Mg(2+)</name>
        <dbReference type="ChEBI" id="CHEBI:18420"/>
        <label>3</label>
    </ligand>
</feature>
<gene>
    <name type="primary">JF67</name>
</gene>
<dbReference type="EC" id="4.2.3.107"/>
<dbReference type="EMBL" id="AF461460">
    <property type="protein sequence ID" value="AAO73863.1"/>
    <property type="molecule type" value="mRNA"/>
</dbReference>
<dbReference type="SMR" id="Q84SM8"/>
<dbReference type="KEGG" id="ag:AAO73863"/>
<dbReference type="BioCyc" id="MetaCyc:MONOMER-12775"/>
<dbReference type="BRENDA" id="4.2.3.107">
    <property type="organism ID" value="4815"/>
</dbReference>
<dbReference type="BRENDA" id="4.2.3.113">
    <property type="organism ID" value="4815"/>
</dbReference>
<dbReference type="UniPathway" id="UPA00924"/>
<dbReference type="GO" id="GO:0009507">
    <property type="term" value="C:chloroplast"/>
    <property type="evidence" value="ECO:0007669"/>
    <property type="project" value="UniProtKB-SubCell"/>
</dbReference>
<dbReference type="GO" id="GO:0016829">
    <property type="term" value="F:lyase activity"/>
    <property type="evidence" value="ECO:0000314"/>
    <property type="project" value="UniProtKB"/>
</dbReference>
<dbReference type="GO" id="GO:0000287">
    <property type="term" value="F:magnesium ion binding"/>
    <property type="evidence" value="ECO:0007669"/>
    <property type="project" value="InterPro"/>
</dbReference>
<dbReference type="GO" id="GO:0010333">
    <property type="term" value="F:terpene synthase activity"/>
    <property type="evidence" value="ECO:0000314"/>
    <property type="project" value="UniProtKB"/>
</dbReference>
<dbReference type="GO" id="GO:0071395">
    <property type="term" value="P:cellular response to jasmonic acid stimulus"/>
    <property type="evidence" value="ECO:0000270"/>
    <property type="project" value="UniProtKB"/>
</dbReference>
<dbReference type="GO" id="GO:0016102">
    <property type="term" value="P:diterpenoid biosynthetic process"/>
    <property type="evidence" value="ECO:0007669"/>
    <property type="project" value="InterPro"/>
</dbReference>
<dbReference type="GO" id="GO:0043693">
    <property type="term" value="P:monoterpene biosynthetic process"/>
    <property type="evidence" value="ECO:0000314"/>
    <property type="project" value="UniProtKB"/>
</dbReference>
<dbReference type="CDD" id="cd00684">
    <property type="entry name" value="Terpene_cyclase_plant_C1"/>
    <property type="match status" value="1"/>
</dbReference>
<dbReference type="FunFam" id="1.50.10.130:FF:000004">
    <property type="entry name" value="Carene synthase, chloroplastic"/>
    <property type="match status" value="1"/>
</dbReference>
<dbReference type="FunFam" id="1.10.600.10:FF:000005">
    <property type="entry name" value="Ent-kaur-16-ene synthase, chloroplastic"/>
    <property type="match status" value="1"/>
</dbReference>
<dbReference type="Gene3D" id="1.10.600.10">
    <property type="entry name" value="Farnesyl Diphosphate Synthase"/>
    <property type="match status" value="1"/>
</dbReference>
<dbReference type="Gene3D" id="1.50.10.130">
    <property type="entry name" value="Terpene synthase, N-terminal domain"/>
    <property type="match status" value="1"/>
</dbReference>
<dbReference type="InterPro" id="IPR008949">
    <property type="entry name" value="Isoprenoid_synthase_dom_sf"/>
</dbReference>
<dbReference type="InterPro" id="IPR034741">
    <property type="entry name" value="Terpene_cyclase-like_1_C"/>
</dbReference>
<dbReference type="InterPro" id="IPR044814">
    <property type="entry name" value="Terpene_cyclase_plant_C1"/>
</dbReference>
<dbReference type="InterPro" id="IPR001906">
    <property type="entry name" value="Terpene_synth_N"/>
</dbReference>
<dbReference type="InterPro" id="IPR036965">
    <property type="entry name" value="Terpene_synth_N_sf"/>
</dbReference>
<dbReference type="InterPro" id="IPR050148">
    <property type="entry name" value="Terpene_synthase-like"/>
</dbReference>
<dbReference type="InterPro" id="IPR005630">
    <property type="entry name" value="Terpene_synthase_metal-bd"/>
</dbReference>
<dbReference type="InterPro" id="IPR008930">
    <property type="entry name" value="Terpenoid_cyclase/PrenylTrfase"/>
</dbReference>
<dbReference type="PANTHER" id="PTHR31225">
    <property type="entry name" value="OS04G0344100 PROTEIN-RELATED"/>
    <property type="match status" value="1"/>
</dbReference>
<dbReference type="Pfam" id="PF01397">
    <property type="entry name" value="Terpene_synth"/>
    <property type="match status" value="1"/>
</dbReference>
<dbReference type="Pfam" id="PF03936">
    <property type="entry name" value="Terpene_synth_C"/>
    <property type="match status" value="1"/>
</dbReference>
<dbReference type="SFLD" id="SFLDS00005">
    <property type="entry name" value="Isoprenoid_Synthase_Type_I"/>
    <property type="match status" value="1"/>
</dbReference>
<dbReference type="SFLD" id="SFLDG01019">
    <property type="entry name" value="Terpene_Cyclase_Like_1_C_Termi"/>
    <property type="match status" value="1"/>
</dbReference>
<dbReference type="SFLD" id="SFLDG01014">
    <property type="entry name" value="Terpene_Cyclase_Like_1_N-term"/>
    <property type="match status" value="1"/>
</dbReference>
<dbReference type="SUPFAM" id="SSF48239">
    <property type="entry name" value="Terpenoid cyclases/Protein prenyltransferases"/>
    <property type="match status" value="1"/>
</dbReference>
<dbReference type="SUPFAM" id="SSF48576">
    <property type="entry name" value="Terpenoid synthases"/>
    <property type="match status" value="1"/>
</dbReference>
<organism>
    <name type="scientific">Picea abies</name>
    <name type="common">Norway spruce</name>
    <name type="synonym">Picea excelsa</name>
    <dbReference type="NCBI Taxonomy" id="3329"/>
    <lineage>
        <taxon>Eukaryota</taxon>
        <taxon>Viridiplantae</taxon>
        <taxon>Streptophyta</taxon>
        <taxon>Embryophyta</taxon>
        <taxon>Tracheophyta</taxon>
        <taxon>Spermatophyta</taxon>
        <taxon>Pinopsida</taxon>
        <taxon>Pinidae</taxon>
        <taxon>Conifers I</taxon>
        <taxon>Pinales</taxon>
        <taxon>Pinaceae</taxon>
        <taxon>Picea</taxon>
    </lineage>
</organism>
<name>3CAR1_PICAB</name>